<protein>
    <recommendedName>
        <fullName>Uncharacterized protein YhfS</fullName>
    </recommendedName>
</protein>
<name>YHFS_ECOLI</name>
<evidence type="ECO:0007829" key="1">
    <source>
        <dbReference type="PDB" id="4J8L"/>
    </source>
</evidence>
<keyword id="KW-0002">3D-structure</keyword>
<keyword id="KW-1185">Reference proteome</keyword>
<dbReference type="EMBL" id="U18997">
    <property type="protein sequence ID" value="AAA58173.1"/>
    <property type="molecule type" value="Genomic_DNA"/>
</dbReference>
<dbReference type="EMBL" id="U00096">
    <property type="protein sequence ID" value="AAC76401.1"/>
    <property type="molecule type" value="Genomic_DNA"/>
</dbReference>
<dbReference type="EMBL" id="AP009048">
    <property type="protein sequence ID" value="BAE77915.1"/>
    <property type="molecule type" value="Genomic_DNA"/>
</dbReference>
<dbReference type="PIR" id="C65132">
    <property type="entry name" value="C65132"/>
</dbReference>
<dbReference type="RefSeq" id="NP_417835.1">
    <property type="nucleotide sequence ID" value="NC_000913.3"/>
</dbReference>
<dbReference type="RefSeq" id="WP_000847144.1">
    <property type="nucleotide sequence ID" value="NZ_STEB01000004.1"/>
</dbReference>
<dbReference type="PDB" id="4J8L">
    <property type="method" value="X-ray"/>
    <property type="resolution" value="1.65 A"/>
    <property type="chains" value="A=2-361"/>
</dbReference>
<dbReference type="PDBsum" id="4J8L"/>
<dbReference type="SMR" id="P45545"/>
<dbReference type="BioGRID" id="4261269">
    <property type="interactions" value="145"/>
</dbReference>
<dbReference type="DIP" id="DIP-12328N"/>
<dbReference type="FunCoup" id="P45545">
    <property type="interactions" value="163"/>
</dbReference>
<dbReference type="IntAct" id="P45545">
    <property type="interactions" value="5"/>
</dbReference>
<dbReference type="STRING" id="511145.b3376"/>
<dbReference type="PaxDb" id="511145-b3376"/>
<dbReference type="EnsemblBacteria" id="AAC76401">
    <property type="protein sequence ID" value="AAC76401"/>
    <property type="gene ID" value="b3376"/>
</dbReference>
<dbReference type="GeneID" id="947884"/>
<dbReference type="KEGG" id="ecj:JW3339"/>
<dbReference type="KEGG" id="eco:b3376"/>
<dbReference type="KEGG" id="ecoc:C3026_18325"/>
<dbReference type="PATRIC" id="fig|511145.12.peg.3469"/>
<dbReference type="EchoBASE" id="EB2750"/>
<dbReference type="eggNOG" id="COG0626">
    <property type="taxonomic scope" value="Bacteria"/>
</dbReference>
<dbReference type="HOGENOM" id="CLU_766715_0_0_6"/>
<dbReference type="InParanoid" id="P45545"/>
<dbReference type="OMA" id="MIRINPM"/>
<dbReference type="OrthoDB" id="9787096at2"/>
<dbReference type="BioCyc" id="EcoCyc:G7728-MONOMER"/>
<dbReference type="EvolutionaryTrace" id="P45545"/>
<dbReference type="PRO" id="PR:P45545"/>
<dbReference type="Proteomes" id="UP000000625">
    <property type="component" value="Chromosome"/>
</dbReference>
<dbReference type="GO" id="GO:0004124">
    <property type="term" value="F:cysteine synthase activity"/>
    <property type="evidence" value="ECO:0000318"/>
    <property type="project" value="GO_Central"/>
</dbReference>
<dbReference type="GO" id="GO:0030170">
    <property type="term" value="F:pyridoxal phosphate binding"/>
    <property type="evidence" value="ECO:0007669"/>
    <property type="project" value="InterPro"/>
</dbReference>
<dbReference type="GO" id="GO:0071269">
    <property type="term" value="P:L-homocysteine biosynthetic process"/>
    <property type="evidence" value="ECO:0000318"/>
    <property type="project" value="GO_Central"/>
</dbReference>
<dbReference type="Gene3D" id="3.90.1150.130">
    <property type="match status" value="1"/>
</dbReference>
<dbReference type="Gene3D" id="3.40.640.10">
    <property type="entry name" value="Type I PLP-dependent aspartate aminotransferase-like (Major domain)"/>
    <property type="match status" value="1"/>
</dbReference>
<dbReference type="InterPro" id="IPR004839">
    <property type="entry name" value="Aminotransferase_I/II_large"/>
</dbReference>
<dbReference type="InterPro" id="IPR006235">
    <property type="entry name" value="OAc-hSer/O-AcSer_sulfhydrylase"/>
</dbReference>
<dbReference type="InterPro" id="IPR015424">
    <property type="entry name" value="PyrdxlP-dep_Trfase"/>
</dbReference>
<dbReference type="InterPro" id="IPR015421">
    <property type="entry name" value="PyrdxlP-dep_Trfase_major"/>
</dbReference>
<dbReference type="InterPro" id="IPR054718">
    <property type="entry name" value="YhfS-like_C"/>
</dbReference>
<dbReference type="PANTHER" id="PTHR43797">
    <property type="entry name" value="HOMOCYSTEINE/CYSTEINE SYNTHASE"/>
    <property type="match status" value="1"/>
</dbReference>
<dbReference type="PANTHER" id="PTHR43797:SF2">
    <property type="entry name" value="HOMOCYSTEINE_CYSTEINE SYNTHASE"/>
    <property type="match status" value="1"/>
</dbReference>
<dbReference type="Pfam" id="PF00155">
    <property type="entry name" value="Aminotran_1_2"/>
    <property type="match status" value="1"/>
</dbReference>
<dbReference type="Pfam" id="PF22475">
    <property type="entry name" value="YhfS-like_C"/>
    <property type="match status" value="1"/>
</dbReference>
<dbReference type="SUPFAM" id="SSF53383">
    <property type="entry name" value="PLP-dependent transferases"/>
    <property type="match status" value="1"/>
</dbReference>
<gene>
    <name type="primary">yhfS</name>
    <name type="ordered locus">b3376</name>
    <name type="ordered locus">JW3339</name>
</gene>
<feature type="chain" id="PRO_0000169528" description="Uncharacterized protein YhfS">
    <location>
        <begin position="1"/>
        <end position="361"/>
    </location>
</feature>
<feature type="helix" evidence="1">
    <location>
        <begin position="11"/>
        <end position="28"/>
    </location>
</feature>
<feature type="helix" evidence="1">
    <location>
        <begin position="31"/>
        <end position="34"/>
    </location>
</feature>
<feature type="turn" evidence="1">
    <location>
        <begin position="44"/>
        <end position="46"/>
    </location>
</feature>
<feature type="helix" evidence="1">
    <location>
        <begin position="50"/>
        <end position="62"/>
    </location>
</feature>
<feature type="strand" evidence="1">
    <location>
        <begin position="66"/>
        <end position="72"/>
    </location>
</feature>
<feature type="helix" evidence="1">
    <location>
        <begin position="74"/>
        <end position="86"/>
    </location>
</feature>
<feature type="strand" evidence="1">
    <location>
        <begin position="92"/>
        <end position="98"/>
    </location>
</feature>
<feature type="helix" evidence="1">
    <location>
        <begin position="102"/>
        <end position="111"/>
    </location>
</feature>
<feature type="strand" evidence="1">
    <location>
        <begin position="114"/>
        <end position="118"/>
    </location>
</feature>
<feature type="helix" evidence="1">
    <location>
        <begin position="123"/>
        <end position="133"/>
    </location>
</feature>
<feature type="strand" evidence="1">
    <location>
        <begin position="136"/>
        <end position="143"/>
    </location>
</feature>
<feature type="helix" evidence="1">
    <location>
        <begin position="153"/>
        <end position="162"/>
    </location>
</feature>
<feature type="strand" evidence="1">
    <location>
        <begin position="167"/>
        <end position="170"/>
    </location>
</feature>
<feature type="turn" evidence="1">
    <location>
        <begin position="172"/>
        <end position="177"/>
    </location>
</feature>
<feature type="helix" evidence="1">
    <location>
        <begin position="182"/>
        <end position="184"/>
    </location>
</feature>
<feature type="strand" evidence="1">
    <location>
        <begin position="188"/>
        <end position="193"/>
    </location>
</feature>
<feature type="strand" evidence="1">
    <location>
        <begin position="203"/>
        <end position="208"/>
    </location>
</feature>
<feature type="helix" evidence="1">
    <location>
        <begin position="210"/>
        <end position="219"/>
    </location>
</feature>
<feature type="turn" evidence="1">
    <location>
        <begin position="223"/>
        <end position="225"/>
    </location>
</feature>
<feature type="helix" evidence="1">
    <location>
        <begin position="229"/>
        <end position="261"/>
    </location>
</feature>
<feature type="strand" evidence="1">
    <location>
        <begin position="268"/>
        <end position="288"/>
    </location>
</feature>
<feature type="helix" evidence="1">
    <location>
        <begin position="290"/>
        <end position="299"/>
    </location>
</feature>
<feature type="strand" evidence="1">
    <location>
        <begin position="303"/>
        <end position="305"/>
    </location>
</feature>
<feature type="strand" evidence="1">
    <location>
        <begin position="307"/>
        <end position="310"/>
    </location>
</feature>
<feature type="strand" evidence="1">
    <location>
        <begin position="318"/>
        <end position="320"/>
    </location>
</feature>
<feature type="helix" evidence="1">
    <location>
        <begin position="324"/>
        <end position="329"/>
    </location>
</feature>
<feature type="helix" evidence="1">
    <location>
        <begin position="333"/>
        <end position="335"/>
    </location>
</feature>
<feature type="strand" evidence="1">
    <location>
        <begin position="337"/>
        <end position="341"/>
    </location>
</feature>
<feature type="helix" evidence="1">
    <location>
        <begin position="347"/>
        <end position="360"/>
    </location>
</feature>
<sequence>MKTFPLQSLTIIEAQQKQFALVDSICRHFPGSEFLTGGDLGLTPGLNQPRVTQRVEQVLADAFHAQAAALVQGAGTGAIRAGLAALLKPGQRLLVHDAPVYPTTRVIIEQMGLTLITVDFNDLSALKQVVDEQQPDAALVQHTRQQPQDSYVLADVLATLRAAGVPALTDDNYAVMKVARIGCECGANVSTFSCFKLFGPEGVGAVVGDADVINRIRATLYSGGSQIQGAQALEVLRGLVFAPVMHAVQAGVSERLLALLNGGAVPEVKSAVIANAQSKVLIVEFHQPIAARVLEEAQKRGALPYPVGAESKYEIPPLFYRLSGTFRQANPQSEHCAIRINPNRSGEETVLRILRESIASI</sequence>
<organism>
    <name type="scientific">Escherichia coli (strain K12)</name>
    <dbReference type="NCBI Taxonomy" id="83333"/>
    <lineage>
        <taxon>Bacteria</taxon>
        <taxon>Pseudomonadati</taxon>
        <taxon>Pseudomonadota</taxon>
        <taxon>Gammaproteobacteria</taxon>
        <taxon>Enterobacterales</taxon>
        <taxon>Enterobacteriaceae</taxon>
        <taxon>Escherichia</taxon>
    </lineage>
</organism>
<proteinExistence type="evidence at protein level"/>
<accession>P45545</accession>
<accession>Q2M741</accession>
<reference key="1">
    <citation type="journal article" date="1997" name="Science">
        <title>The complete genome sequence of Escherichia coli K-12.</title>
        <authorList>
            <person name="Blattner F.R."/>
            <person name="Plunkett G. III"/>
            <person name="Bloch C.A."/>
            <person name="Perna N.T."/>
            <person name="Burland V."/>
            <person name="Riley M."/>
            <person name="Collado-Vides J."/>
            <person name="Glasner J.D."/>
            <person name="Rode C.K."/>
            <person name="Mayhew G.F."/>
            <person name="Gregor J."/>
            <person name="Davis N.W."/>
            <person name="Kirkpatrick H.A."/>
            <person name="Goeden M.A."/>
            <person name="Rose D.J."/>
            <person name="Mau B."/>
            <person name="Shao Y."/>
        </authorList>
    </citation>
    <scope>NUCLEOTIDE SEQUENCE [LARGE SCALE GENOMIC DNA]</scope>
    <source>
        <strain>K12 / MG1655 / ATCC 47076</strain>
    </source>
</reference>
<reference key="2">
    <citation type="journal article" date="2006" name="Mol. Syst. Biol.">
        <title>Highly accurate genome sequences of Escherichia coli K-12 strains MG1655 and W3110.</title>
        <authorList>
            <person name="Hayashi K."/>
            <person name="Morooka N."/>
            <person name="Yamamoto Y."/>
            <person name="Fujita K."/>
            <person name="Isono K."/>
            <person name="Choi S."/>
            <person name="Ohtsubo E."/>
            <person name="Baba T."/>
            <person name="Wanner B.L."/>
            <person name="Mori H."/>
            <person name="Horiuchi T."/>
        </authorList>
    </citation>
    <scope>NUCLEOTIDE SEQUENCE [LARGE SCALE GENOMIC DNA]</scope>
    <source>
        <strain>K12 / W3110 / ATCC 27325 / DSM 5911</strain>
    </source>
</reference>